<reference key="1">
    <citation type="journal article" date="2002" name="J. Biosci. Bioeng.">
        <title>Diversity of 2,3-dihydroxybiphenyl dioxygenase genes in a strong PCB degrader, Rhodococcus sp. strain RHA1.</title>
        <authorList>
            <person name="Sakai M."/>
            <person name="Masai E."/>
            <person name="Asami H."/>
            <person name="Sugiyama K."/>
            <person name="Kimbara K."/>
            <person name="Fukuda M."/>
        </authorList>
    </citation>
    <scope>NUCLEOTIDE SEQUENCE [GENOMIC DNA]</scope>
    <scope>FUNCTION IN THE DEGRADATION OF BIPHENYL AND POLYCHLORINATED BIPHENYLS</scope>
    <source>
        <strain>RHA1</strain>
    </source>
</reference>
<reference key="2">
    <citation type="journal article" date="2006" name="Proc. Natl. Acad. Sci. U.S.A.">
        <title>The complete genome of Rhodococcus sp. RHA1 provides insights into a catabolic powerhouse.</title>
        <authorList>
            <person name="McLeod M.P."/>
            <person name="Warren R.L."/>
            <person name="Hsiao W.W.L."/>
            <person name="Araki N."/>
            <person name="Myhre M."/>
            <person name="Fernandes C."/>
            <person name="Miyazawa D."/>
            <person name="Wong W."/>
            <person name="Lillquist A.L."/>
            <person name="Wang D."/>
            <person name="Dosanjh M."/>
            <person name="Hara H."/>
            <person name="Petrescu A."/>
            <person name="Morin R.D."/>
            <person name="Yang G."/>
            <person name="Stott J.M."/>
            <person name="Schein J.E."/>
            <person name="Shin H."/>
            <person name="Smailus D."/>
            <person name="Siddiqui A.S."/>
            <person name="Marra M.A."/>
            <person name="Jones S.J.M."/>
            <person name="Holt R."/>
            <person name="Brinkman F.S.L."/>
            <person name="Miyauchi K."/>
            <person name="Fukuda M."/>
            <person name="Davies J.E."/>
            <person name="Mohn W.W."/>
            <person name="Eltis L.D."/>
        </authorList>
    </citation>
    <scope>NUCLEOTIDE SEQUENCE [LARGE SCALE GENOMIC DNA]</scope>
    <source>
        <strain>RHA1</strain>
    </source>
</reference>
<reference key="3">
    <citation type="journal article" date="2007" name="Proc. Natl. Acad. Sci. U.S.A.">
        <title>A gene cluster encoding cholesterol catabolism in a soil actinomycete provides insight into Mycobacterium tuberculosis survival in macrophages.</title>
        <authorList>
            <person name="Van der Geize R."/>
            <person name="Yam K."/>
            <person name="Heuser T."/>
            <person name="Wilbrink M.H."/>
            <person name="Hara H."/>
            <person name="Anderton M.C."/>
            <person name="Sim E."/>
            <person name="Dijkhuizen L."/>
            <person name="Davies J.E."/>
            <person name="Mohn W.W."/>
            <person name="Eltis L.D."/>
        </authorList>
    </citation>
    <scope>FUNCTION IN CHOLESTEROL DEGRADATION</scope>
    <scope>DISRUPTION PHENOTYPE</scope>
    <source>
        <strain>RHA1</strain>
    </source>
</reference>
<protein>
    <recommendedName>
        <fullName>Iron-dependent extradiol dioxygenase</fullName>
        <ecNumber>1.13.11.25</ecNumber>
    </recommendedName>
</protein>
<sequence length="300" mass="33515">MSIRSLAYMRIEATDMSAWREYGLKVLGMVEGKGSDPDALYLRMDDFPARLVIFPGEHDRLSVSGWETANAAELQEVRDNLSAAGVAFKEGTAEQLQDRRVDELITFEDPSGNTLEAFHGAALEHRRVVSPYGHKFVTGEQGLGHVVLSTTDDEASLRFYRDVLGFRLRDSMRLPPQLVGRPADGKPAWLRFFGCNPRHHSLAFLPMPTPSGIVHLMIEVENSDDVGLCLDRALRKKVKMSATLGRHVNDLMLSFYMKTPGGFDIEFGCEGRQVEDESWIARESTAVSLWGHDFSVGMQP</sequence>
<evidence type="ECO:0000250" key="1"/>
<evidence type="ECO:0000255" key="2">
    <source>
        <dbReference type="PROSITE-ProRule" id="PRU01163"/>
    </source>
</evidence>
<evidence type="ECO:0000269" key="3">
    <source>
    </source>
</evidence>
<evidence type="ECO:0000269" key="4">
    <source>
    </source>
</evidence>
<evidence type="ECO:0000305" key="5"/>
<feature type="chain" id="PRO_0000404508" description="Iron-dependent extradiol dioxygenase">
    <location>
        <begin position="1"/>
        <end position="300"/>
    </location>
</feature>
<feature type="domain" description="VOC 1" evidence="2">
    <location>
        <begin position="5"/>
        <end position="120"/>
    </location>
</feature>
<feature type="domain" description="VOC 2" evidence="2">
    <location>
        <begin position="142"/>
        <end position="270"/>
    </location>
</feature>
<feature type="binding site" evidence="1">
    <location>
        <position position="145"/>
    </location>
    <ligand>
        <name>Fe cation</name>
        <dbReference type="ChEBI" id="CHEBI:24875"/>
    </ligand>
</feature>
<feature type="binding site" evidence="1">
    <location>
        <position position="200"/>
    </location>
    <ligand>
        <name>substrate</name>
    </ligand>
</feature>
<feature type="binding site" evidence="1">
    <location>
        <position position="215"/>
    </location>
    <ligand>
        <name>Fe cation</name>
        <dbReference type="ChEBI" id="CHEBI:24875"/>
    </ligand>
</feature>
<feature type="binding site" evidence="1">
    <location>
        <position position="215"/>
    </location>
    <ligand>
        <name>substrate</name>
    </ligand>
</feature>
<feature type="binding site" evidence="1">
    <location>
        <position position="250"/>
    </location>
    <ligand>
        <name>substrate</name>
    </ligand>
</feature>
<feature type="binding site" evidence="1">
    <location>
        <position position="256"/>
    </location>
    <ligand>
        <name>substrate</name>
    </ligand>
</feature>
<feature type="binding site" evidence="1">
    <location>
        <position position="266"/>
    </location>
    <ligand>
        <name>Fe cation</name>
        <dbReference type="ChEBI" id="CHEBI:24875"/>
    </ligand>
</feature>
<name>HSAC_RHOJR</name>
<organism>
    <name type="scientific">Rhodococcus jostii (strain RHA1)</name>
    <dbReference type="NCBI Taxonomy" id="101510"/>
    <lineage>
        <taxon>Bacteria</taxon>
        <taxon>Bacillati</taxon>
        <taxon>Actinomycetota</taxon>
        <taxon>Actinomycetes</taxon>
        <taxon>Mycobacteriales</taxon>
        <taxon>Nocardiaceae</taxon>
        <taxon>Rhodococcus</taxon>
    </lineage>
</organism>
<dbReference type="EC" id="1.13.11.25"/>
<dbReference type="EMBL" id="CP000431">
    <property type="protein sequence ID" value="ABG96327.1"/>
    <property type="molecule type" value="Genomic_DNA"/>
</dbReference>
<dbReference type="EMBL" id="AB030672">
    <property type="protein sequence ID" value="BAA98137.1"/>
    <property type="molecule type" value="Genomic_DNA"/>
</dbReference>
<dbReference type="RefSeq" id="WP_011596919.1">
    <property type="nucleotide sequence ID" value="NC_008268.1"/>
</dbReference>
<dbReference type="SMR" id="Q9KWQ5"/>
<dbReference type="KEGG" id="rha:RHA1_ro04541"/>
<dbReference type="PATRIC" id="fig|101510.16.peg.4577"/>
<dbReference type="eggNOG" id="COG0346">
    <property type="taxonomic scope" value="Bacteria"/>
</dbReference>
<dbReference type="HOGENOM" id="CLU_052361_2_0_11"/>
<dbReference type="OrthoDB" id="6909416at2"/>
<dbReference type="BioCyc" id="MetaCyc:MONOMER-16964"/>
<dbReference type="UniPathway" id="UPA00296"/>
<dbReference type="Proteomes" id="UP000008710">
    <property type="component" value="Chromosome"/>
</dbReference>
<dbReference type="GO" id="GO:0047071">
    <property type="term" value="F:3,4-dihydroxy-9,10-secoandrosta-1,3,5(10)-triene-9,17-dione 4,5-dioxygenase activity"/>
    <property type="evidence" value="ECO:0007669"/>
    <property type="project" value="UniProtKB-EC"/>
</dbReference>
<dbReference type="GO" id="GO:0008198">
    <property type="term" value="F:ferrous iron binding"/>
    <property type="evidence" value="ECO:0007669"/>
    <property type="project" value="InterPro"/>
</dbReference>
<dbReference type="GO" id="GO:0016702">
    <property type="term" value="F:oxidoreductase activity, acting on single donors with incorporation of molecular oxygen, incorporation of two atoms of oxygen"/>
    <property type="evidence" value="ECO:0000314"/>
    <property type="project" value="UniProtKB"/>
</dbReference>
<dbReference type="GO" id="GO:0008203">
    <property type="term" value="P:cholesterol metabolic process"/>
    <property type="evidence" value="ECO:0007669"/>
    <property type="project" value="UniProtKB-UniPathway"/>
</dbReference>
<dbReference type="GO" id="GO:0016042">
    <property type="term" value="P:lipid catabolic process"/>
    <property type="evidence" value="ECO:0007669"/>
    <property type="project" value="UniProtKB-KW"/>
</dbReference>
<dbReference type="GO" id="GO:0070723">
    <property type="term" value="P:response to cholesterol"/>
    <property type="evidence" value="ECO:0000270"/>
    <property type="project" value="UniProtKB"/>
</dbReference>
<dbReference type="CDD" id="cd07237">
    <property type="entry name" value="BphC1-RGP6_C_like"/>
    <property type="match status" value="1"/>
</dbReference>
<dbReference type="CDD" id="cd07252">
    <property type="entry name" value="BphC1-RGP6_N_like"/>
    <property type="match status" value="1"/>
</dbReference>
<dbReference type="FunFam" id="3.10.180.10:FF:000012">
    <property type="entry name" value="2,3-dihydroxybiphenyl 1,2-dioxygenase"/>
    <property type="match status" value="1"/>
</dbReference>
<dbReference type="Gene3D" id="3.10.180.10">
    <property type="entry name" value="2,3-Dihydroxybiphenyl 1,2-Dioxygenase, domain 1"/>
    <property type="match status" value="2"/>
</dbReference>
<dbReference type="InterPro" id="IPR029068">
    <property type="entry name" value="Glyas_Bleomycin-R_OHBP_Dase"/>
</dbReference>
<dbReference type="InterPro" id="IPR004360">
    <property type="entry name" value="Glyas_Fos-R_dOase_dom"/>
</dbReference>
<dbReference type="InterPro" id="IPR050383">
    <property type="entry name" value="GlyoxalaseI/FosfomycinResist"/>
</dbReference>
<dbReference type="InterPro" id="IPR054680">
    <property type="entry name" value="HsaC"/>
</dbReference>
<dbReference type="InterPro" id="IPR037523">
    <property type="entry name" value="VOC"/>
</dbReference>
<dbReference type="InterPro" id="IPR000486">
    <property type="entry name" value="Xdiol_ring_cleave_dOase_1/2"/>
</dbReference>
<dbReference type="NCBIfam" id="NF045631">
    <property type="entry name" value="exdiol_diox_HsaC"/>
    <property type="match status" value="1"/>
</dbReference>
<dbReference type="PANTHER" id="PTHR21366:SF14">
    <property type="entry name" value="GLYOXALASE DOMAIN-CONTAINING PROTEIN 5"/>
    <property type="match status" value="1"/>
</dbReference>
<dbReference type="PANTHER" id="PTHR21366">
    <property type="entry name" value="GLYOXALASE FAMILY PROTEIN"/>
    <property type="match status" value="1"/>
</dbReference>
<dbReference type="Pfam" id="PF22632">
    <property type="entry name" value="BphC_D1"/>
    <property type="match status" value="1"/>
</dbReference>
<dbReference type="Pfam" id="PF00903">
    <property type="entry name" value="Glyoxalase"/>
    <property type="match status" value="1"/>
</dbReference>
<dbReference type="SUPFAM" id="SSF54593">
    <property type="entry name" value="Glyoxalase/Bleomycin resistance protein/Dihydroxybiphenyl dioxygenase"/>
    <property type="match status" value="2"/>
</dbReference>
<dbReference type="PROSITE" id="PS00082">
    <property type="entry name" value="EXTRADIOL_DIOXYGENAS"/>
    <property type="match status" value="1"/>
</dbReference>
<dbReference type="PROSITE" id="PS51819">
    <property type="entry name" value="VOC"/>
    <property type="match status" value="2"/>
</dbReference>
<accession>Q9KWQ5</accession>
<comment type="function">
    <text evidence="3 4">Catalyzes the meta-cleavage of 3,4-dihydroxy-9,10-seconandrost-1,3,5(10)-triene-9,17-dione (3,4-DHSA) to produce 4,5-9,10-diseco-3-hydroxy-5,9,17-trioxoandrosta-1(10),2-diene-4-oic acid (4,9-DSHA). Also involved in biphenyl and polychlorinated biphenyls (PCBs) degradation.</text>
</comment>
<comment type="catalytic activity">
    <reaction>
        <text>3,4-dihydroxy-9,10-secoandrosta-1,3,5(10)-triene-9,17-dione + O2 = (1E,2Z)-3-hydroxy-5,9,17-trioxo-4,5:9,10-disecoandrosta-1(10),2-dien-4-oate + H(+)</text>
        <dbReference type="Rhea" id="RHEA:21352"/>
        <dbReference type="ChEBI" id="CHEBI:15378"/>
        <dbReference type="ChEBI" id="CHEBI:15379"/>
        <dbReference type="ChEBI" id="CHEBI:15896"/>
        <dbReference type="ChEBI" id="CHEBI:63690"/>
        <dbReference type="EC" id="1.13.11.25"/>
    </reaction>
</comment>
<comment type="cofactor">
    <cofactor evidence="1">
        <name>Fe(2+)</name>
        <dbReference type="ChEBI" id="CHEBI:29033"/>
    </cofactor>
    <text evidence="1">Binds 1 Fe(2+) ion per subunit.</text>
</comment>
<comment type="pathway">
    <text>Steroid metabolism; cholesterol metabolism.</text>
</comment>
<comment type="subunit">
    <text evidence="1">Homodimer.</text>
</comment>
<comment type="disruption phenotype">
    <text evidence="4">Cells lacking this gene grow on cholesterol at a rate that is 60% that of the wild-type and develop a pink color consistent with the accumulation and nonenzymatic oxidation of a catechol.</text>
</comment>
<comment type="similarity">
    <text evidence="5">Belongs to the extradiol ring-cleavage dioxygenase family.</text>
</comment>
<proteinExistence type="evidence at protein level"/>
<keyword id="KW-0058">Aromatic hydrocarbons catabolism</keyword>
<keyword id="KW-0153">Cholesterol metabolism</keyword>
<keyword id="KW-0223">Dioxygenase</keyword>
<keyword id="KW-0408">Iron</keyword>
<keyword id="KW-0442">Lipid degradation</keyword>
<keyword id="KW-0443">Lipid metabolism</keyword>
<keyword id="KW-0479">Metal-binding</keyword>
<keyword id="KW-0560">Oxidoreductase</keyword>
<keyword id="KW-0677">Repeat</keyword>
<keyword id="KW-0753">Steroid metabolism</keyword>
<keyword id="KW-1207">Sterol metabolism</keyword>
<gene>
    <name type="primary">hsaC</name>
    <name type="synonym">bphC5</name>
    <name type="ordered locus">RHA1_ro04541</name>
</gene>